<protein>
    <recommendedName>
        <fullName>Chaperone protein ClpB</fullName>
    </recommendedName>
</protein>
<dbReference type="EMBL" id="AE016879">
    <property type="protein sequence ID" value="AAP25141.1"/>
    <property type="molecule type" value="Genomic_DNA"/>
</dbReference>
<dbReference type="EMBL" id="AE017334">
    <property type="protein sequence ID" value="AAT30265.1"/>
    <property type="molecule type" value="Genomic_DNA"/>
</dbReference>
<dbReference type="EMBL" id="AE017225">
    <property type="protein sequence ID" value="AAT53413.1"/>
    <property type="molecule type" value="Genomic_DNA"/>
</dbReference>
<dbReference type="RefSeq" id="NP_843655.1">
    <property type="nucleotide sequence ID" value="NC_003997.3"/>
</dbReference>
<dbReference type="RefSeq" id="WP_000365381.1">
    <property type="nucleotide sequence ID" value="NZ_WXXJ01000044.1"/>
</dbReference>
<dbReference type="RefSeq" id="YP_027362.1">
    <property type="nucleotide sequence ID" value="NC_005945.1"/>
</dbReference>
<dbReference type="SMR" id="Q81TT4"/>
<dbReference type="IntAct" id="Q81TT4">
    <property type="interactions" value="26"/>
</dbReference>
<dbReference type="STRING" id="261594.GBAA_1177"/>
<dbReference type="DNASU" id="1086217"/>
<dbReference type="GeneID" id="45021187"/>
<dbReference type="KEGG" id="ban:BA_1177"/>
<dbReference type="KEGG" id="bar:GBAA_1177"/>
<dbReference type="KEGG" id="bat:BAS1090"/>
<dbReference type="PATRIC" id="fig|198094.11.peg.1157"/>
<dbReference type="eggNOG" id="COG0542">
    <property type="taxonomic scope" value="Bacteria"/>
</dbReference>
<dbReference type="HOGENOM" id="CLU_005070_4_0_9"/>
<dbReference type="OMA" id="GPMDASN"/>
<dbReference type="OrthoDB" id="9803641at2"/>
<dbReference type="Proteomes" id="UP000000427">
    <property type="component" value="Chromosome"/>
</dbReference>
<dbReference type="Proteomes" id="UP000000594">
    <property type="component" value="Chromosome"/>
</dbReference>
<dbReference type="GO" id="GO:0005737">
    <property type="term" value="C:cytoplasm"/>
    <property type="evidence" value="ECO:0007669"/>
    <property type="project" value="UniProtKB-SubCell"/>
</dbReference>
<dbReference type="GO" id="GO:0005524">
    <property type="term" value="F:ATP binding"/>
    <property type="evidence" value="ECO:0007669"/>
    <property type="project" value="UniProtKB-KW"/>
</dbReference>
<dbReference type="GO" id="GO:0016887">
    <property type="term" value="F:ATP hydrolysis activity"/>
    <property type="evidence" value="ECO:0007669"/>
    <property type="project" value="InterPro"/>
</dbReference>
<dbReference type="GO" id="GO:0034605">
    <property type="term" value="P:cellular response to heat"/>
    <property type="evidence" value="ECO:0007669"/>
    <property type="project" value="TreeGrafter"/>
</dbReference>
<dbReference type="GO" id="GO:0042026">
    <property type="term" value="P:protein refolding"/>
    <property type="evidence" value="ECO:0007669"/>
    <property type="project" value="InterPro"/>
</dbReference>
<dbReference type="CDD" id="cd00009">
    <property type="entry name" value="AAA"/>
    <property type="match status" value="1"/>
</dbReference>
<dbReference type="CDD" id="cd19499">
    <property type="entry name" value="RecA-like_ClpB_Hsp104-like"/>
    <property type="match status" value="1"/>
</dbReference>
<dbReference type="FunFam" id="1.10.8.60:FF:000017">
    <property type="entry name" value="ATP-dependent chaperone ClpB"/>
    <property type="match status" value="1"/>
</dbReference>
<dbReference type="FunFam" id="3.40.50.300:FF:000120">
    <property type="entry name" value="ATP-dependent chaperone ClpB"/>
    <property type="match status" value="1"/>
</dbReference>
<dbReference type="FunFam" id="3.40.50.300:FF:000025">
    <property type="entry name" value="ATP-dependent Clp protease subunit"/>
    <property type="match status" value="1"/>
</dbReference>
<dbReference type="FunFam" id="3.40.50.300:FF:000010">
    <property type="entry name" value="Chaperone clpB 1, putative"/>
    <property type="match status" value="1"/>
</dbReference>
<dbReference type="Gene3D" id="1.10.8.60">
    <property type="match status" value="1"/>
</dbReference>
<dbReference type="Gene3D" id="1.10.1780.10">
    <property type="entry name" value="Clp, N-terminal domain"/>
    <property type="match status" value="1"/>
</dbReference>
<dbReference type="Gene3D" id="3.40.50.300">
    <property type="entry name" value="P-loop containing nucleotide triphosphate hydrolases"/>
    <property type="match status" value="3"/>
</dbReference>
<dbReference type="InterPro" id="IPR003593">
    <property type="entry name" value="AAA+_ATPase"/>
</dbReference>
<dbReference type="InterPro" id="IPR003959">
    <property type="entry name" value="ATPase_AAA_core"/>
</dbReference>
<dbReference type="InterPro" id="IPR017730">
    <property type="entry name" value="Chaperonin_ClpB"/>
</dbReference>
<dbReference type="InterPro" id="IPR019489">
    <property type="entry name" value="Clp_ATPase_C"/>
</dbReference>
<dbReference type="InterPro" id="IPR036628">
    <property type="entry name" value="Clp_N_dom_sf"/>
</dbReference>
<dbReference type="InterPro" id="IPR004176">
    <property type="entry name" value="Clp_R_dom"/>
</dbReference>
<dbReference type="InterPro" id="IPR001270">
    <property type="entry name" value="ClpA/B"/>
</dbReference>
<dbReference type="InterPro" id="IPR018368">
    <property type="entry name" value="ClpA/B_CS1"/>
</dbReference>
<dbReference type="InterPro" id="IPR028299">
    <property type="entry name" value="ClpA/B_CS2"/>
</dbReference>
<dbReference type="InterPro" id="IPR041546">
    <property type="entry name" value="ClpA/ClpB_AAA_lid"/>
</dbReference>
<dbReference type="InterPro" id="IPR050130">
    <property type="entry name" value="ClpA_ClpB"/>
</dbReference>
<dbReference type="InterPro" id="IPR027417">
    <property type="entry name" value="P-loop_NTPase"/>
</dbReference>
<dbReference type="NCBIfam" id="TIGR03346">
    <property type="entry name" value="chaperone_ClpB"/>
    <property type="match status" value="1"/>
</dbReference>
<dbReference type="PANTHER" id="PTHR11638">
    <property type="entry name" value="ATP-DEPENDENT CLP PROTEASE"/>
    <property type="match status" value="1"/>
</dbReference>
<dbReference type="PANTHER" id="PTHR11638:SF18">
    <property type="entry name" value="HEAT SHOCK PROTEIN 104"/>
    <property type="match status" value="1"/>
</dbReference>
<dbReference type="Pfam" id="PF00004">
    <property type="entry name" value="AAA"/>
    <property type="match status" value="1"/>
</dbReference>
<dbReference type="Pfam" id="PF07724">
    <property type="entry name" value="AAA_2"/>
    <property type="match status" value="1"/>
</dbReference>
<dbReference type="Pfam" id="PF17871">
    <property type="entry name" value="AAA_lid_9"/>
    <property type="match status" value="1"/>
</dbReference>
<dbReference type="Pfam" id="PF02861">
    <property type="entry name" value="Clp_N"/>
    <property type="match status" value="2"/>
</dbReference>
<dbReference type="Pfam" id="PF10431">
    <property type="entry name" value="ClpB_D2-small"/>
    <property type="match status" value="1"/>
</dbReference>
<dbReference type="PRINTS" id="PR00300">
    <property type="entry name" value="CLPPROTEASEA"/>
</dbReference>
<dbReference type="SMART" id="SM00382">
    <property type="entry name" value="AAA"/>
    <property type="match status" value="2"/>
</dbReference>
<dbReference type="SMART" id="SM01086">
    <property type="entry name" value="ClpB_D2-small"/>
    <property type="match status" value="1"/>
</dbReference>
<dbReference type="SUPFAM" id="SSF81923">
    <property type="entry name" value="Double Clp-N motif"/>
    <property type="match status" value="1"/>
</dbReference>
<dbReference type="SUPFAM" id="SSF52540">
    <property type="entry name" value="P-loop containing nucleoside triphosphate hydrolases"/>
    <property type="match status" value="2"/>
</dbReference>
<dbReference type="PROSITE" id="PS51903">
    <property type="entry name" value="CLP_R"/>
    <property type="match status" value="1"/>
</dbReference>
<dbReference type="PROSITE" id="PS00870">
    <property type="entry name" value="CLPAB_1"/>
    <property type="match status" value="1"/>
</dbReference>
<dbReference type="PROSITE" id="PS00871">
    <property type="entry name" value="CLPAB_2"/>
    <property type="match status" value="1"/>
</dbReference>
<organism>
    <name type="scientific">Bacillus anthracis</name>
    <dbReference type="NCBI Taxonomy" id="1392"/>
    <lineage>
        <taxon>Bacteria</taxon>
        <taxon>Bacillati</taxon>
        <taxon>Bacillota</taxon>
        <taxon>Bacilli</taxon>
        <taxon>Bacillales</taxon>
        <taxon>Bacillaceae</taxon>
        <taxon>Bacillus</taxon>
        <taxon>Bacillus cereus group</taxon>
    </lineage>
</organism>
<accession>Q81TT4</accession>
<accession>Q6I218</accession>
<accession>Q6KVV5</accession>
<keyword id="KW-0067">ATP-binding</keyword>
<keyword id="KW-0143">Chaperone</keyword>
<keyword id="KW-0175">Coiled coil</keyword>
<keyword id="KW-0963">Cytoplasm</keyword>
<keyword id="KW-0547">Nucleotide-binding</keyword>
<keyword id="KW-1185">Reference proteome</keyword>
<keyword id="KW-0677">Repeat</keyword>
<keyword id="KW-0346">Stress response</keyword>
<name>CLPB_BACAN</name>
<comment type="function">
    <text evidence="1">Part of a stress-induced multi-chaperone system, it is involved in the recovery of the cell from heat-induced damage, in cooperation with DnaK, DnaJ and GrpE. Acts before DnaK, in the processing of protein aggregates. Protein binding stimulates the ATPase activity; ATP hydrolysis unfolds the denatured protein aggregates, which probably helps expose new hydrophobic binding sites on the surface of ClpB-bound aggregates, contributing to the solubilization and refolding of denatured protein aggregates by DnaK (By similarity).</text>
</comment>
<comment type="subunit">
    <text evidence="1">Homohexamer. The oligomerization is ATP-dependent (By similarity).</text>
</comment>
<comment type="subcellular location">
    <subcellularLocation>
        <location evidence="3">Cytoplasm</location>
    </subcellularLocation>
</comment>
<comment type="domain">
    <text evidence="1">The Clp repeat (R) domain probably functions as a substrate-discriminating domain, recruiting aggregated proteins to the ClpB hexamer and/or stabilizing bound proteins. The NBD2 domain is responsible for oligomerization, whereas the NBD1 domain stabilizes the hexamer probably in an ATP-dependent manner. The movement of the coiled-coil domain is essential for ClpB ability to rescue proteins from an aggregated state, probably by pulling apart large aggregated proteins, which are bound between the coiled-coils motifs of adjacent ClpB subunits in the functional hexamer (By similarity).</text>
</comment>
<comment type="similarity">
    <text evidence="3">Belongs to the ClpA/ClpB family.</text>
</comment>
<feature type="chain" id="PRO_0000191088" description="Chaperone protein ClpB">
    <location>
        <begin position="1"/>
        <end position="866"/>
    </location>
</feature>
<feature type="domain" description="Clp R" evidence="2">
    <location>
        <begin position="3"/>
        <end position="149"/>
    </location>
</feature>
<feature type="region of interest" description="Repeat 1" evidence="2">
    <location>
        <begin position="6"/>
        <end position="71"/>
    </location>
</feature>
<feature type="region of interest" description="Repeat 2" evidence="2">
    <location>
        <begin position="86"/>
        <end position="149"/>
    </location>
</feature>
<feature type="region of interest" description="NBD1" evidence="1">
    <location>
        <begin position="162"/>
        <end position="343"/>
    </location>
</feature>
<feature type="region of interest" description="Linker" evidence="1">
    <location>
        <begin position="344"/>
        <end position="551"/>
    </location>
</feature>
<feature type="region of interest" description="NBD2" evidence="1">
    <location>
        <begin position="561"/>
        <end position="773"/>
    </location>
</feature>
<feature type="region of interest" description="C-terminal" evidence="1">
    <location>
        <begin position="774"/>
        <end position="866"/>
    </location>
</feature>
<feature type="coiled-coil region" evidence="1">
    <location>
        <begin position="394"/>
        <end position="528"/>
    </location>
</feature>
<feature type="binding site" evidence="1">
    <location>
        <begin position="209"/>
        <end position="216"/>
    </location>
    <ligand>
        <name>ATP</name>
        <dbReference type="ChEBI" id="CHEBI:30616"/>
        <label>1</label>
    </ligand>
</feature>
<feature type="binding site" evidence="1">
    <location>
        <begin position="611"/>
        <end position="618"/>
    </location>
    <ligand>
        <name>ATP</name>
        <dbReference type="ChEBI" id="CHEBI:30616"/>
        <label>2</label>
    </ligand>
</feature>
<sequence length="866" mass="97545">MDLNQMTTKTQEAIMSAQSLAVSHHHQEVDTVHLLFTLLEEQDGLAVRIFQKMNVDIEALKQGVENLIKKKPSVTGSGAEAGKLYITGALQQLLVRAGKEAEKLQDDYISVEHVLLAFTEEKGDISQLFTRFHITKDNLLQSLMTVRGNQRVTSQNPEATYEALEKYGRDLVAEVKAGKIDPVIGRDSEIRRVIRILSRKTKNNPVLIGEPGVGKTAIVEGLAQRIVKKDVPEGLKDRTIFALDMSALVAGAKFRGEFEERLQAVLNEIKKSEGRILLFIDELHTIVGAGKTEGAMDAGNMLKPMLARGELHCIGATTLDEYRKYIEKDPALERRFQQVLAEEPTVEDTISILRGLKERFEIYHGVNIHDRAIVAASVLSDRYISDRFLPDKAIDLVDEACATIRTEIDSMPTELDEVTRRIMQLEIEEAALGKEKDFGSQERLKTLQRELSDLKEVASSMRAKWEKEKEDIHKVRDLREHLERLRRELEEAEGNYDLNRAAELRHGKIPAIEKELKEAEEMGANNKQENRLLREEVSEEEIADIVSRWTGIPVAKLVEGEREKLLRLEQILSERVIGQEEAVSLVSDAVLRARAGIKDPNRPIGSFIFLGPTGVGKTELAKTLAQSLFDSEEQMIRIDMSEYMEKHAVSRLIGAPPGYVGYEEGGQLTEAVRRKPYSVILLDEIEKAHPEVFNILLQMLDDGRITDSQGRTVDFKNTVIIMTSNIGSAHLLDGLEEDGSIKEESRELVMGQLRGHFRPEFLNRVDEIILFKPLTTNEIKGIVDKIVKELQGRLADRHITVKLTEAAKEFVVEAGFDPMYGARPLKRYVQRQVETKLARELIAGTITDNSHVVVDVENNELVVHVK</sequence>
<gene>
    <name type="primary">clpB</name>
    <name type="ordered locus">BA_1177</name>
    <name type="ordered locus">GBAA_1177</name>
    <name type="ordered locus">BAS1090</name>
</gene>
<evidence type="ECO:0000250" key="1"/>
<evidence type="ECO:0000255" key="2">
    <source>
        <dbReference type="PROSITE-ProRule" id="PRU01251"/>
    </source>
</evidence>
<evidence type="ECO:0000305" key="3"/>
<reference key="1">
    <citation type="journal article" date="2003" name="Nature">
        <title>The genome sequence of Bacillus anthracis Ames and comparison to closely related bacteria.</title>
        <authorList>
            <person name="Read T.D."/>
            <person name="Peterson S.N."/>
            <person name="Tourasse N.J."/>
            <person name="Baillie L.W."/>
            <person name="Paulsen I.T."/>
            <person name="Nelson K.E."/>
            <person name="Tettelin H."/>
            <person name="Fouts D.E."/>
            <person name="Eisen J.A."/>
            <person name="Gill S.R."/>
            <person name="Holtzapple E.K."/>
            <person name="Okstad O.A."/>
            <person name="Helgason E."/>
            <person name="Rilstone J."/>
            <person name="Wu M."/>
            <person name="Kolonay J.F."/>
            <person name="Beanan M.J."/>
            <person name="Dodson R.J."/>
            <person name="Brinkac L.M."/>
            <person name="Gwinn M.L."/>
            <person name="DeBoy R.T."/>
            <person name="Madpu R."/>
            <person name="Daugherty S.C."/>
            <person name="Durkin A.S."/>
            <person name="Haft D.H."/>
            <person name="Nelson W.C."/>
            <person name="Peterson J.D."/>
            <person name="Pop M."/>
            <person name="Khouri H.M."/>
            <person name="Radune D."/>
            <person name="Benton J.L."/>
            <person name="Mahamoud Y."/>
            <person name="Jiang L."/>
            <person name="Hance I.R."/>
            <person name="Weidman J.F."/>
            <person name="Berry K.J."/>
            <person name="Plaut R.D."/>
            <person name="Wolf A.M."/>
            <person name="Watkins K.L."/>
            <person name="Nierman W.C."/>
            <person name="Hazen A."/>
            <person name="Cline R.T."/>
            <person name="Redmond C."/>
            <person name="Thwaite J.E."/>
            <person name="White O."/>
            <person name="Salzberg S.L."/>
            <person name="Thomason B."/>
            <person name="Friedlander A.M."/>
            <person name="Koehler T.M."/>
            <person name="Hanna P.C."/>
            <person name="Kolstoe A.-B."/>
            <person name="Fraser C.M."/>
        </authorList>
    </citation>
    <scope>NUCLEOTIDE SEQUENCE [LARGE SCALE GENOMIC DNA]</scope>
    <source>
        <strain>Ames / isolate Porton</strain>
    </source>
</reference>
<reference key="2">
    <citation type="journal article" date="2009" name="J. Bacteriol.">
        <title>The complete genome sequence of Bacillus anthracis Ames 'Ancestor'.</title>
        <authorList>
            <person name="Ravel J."/>
            <person name="Jiang L."/>
            <person name="Stanley S.T."/>
            <person name="Wilson M.R."/>
            <person name="Decker R.S."/>
            <person name="Read T.D."/>
            <person name="Worsham P."/>
            <person name="Keim P.S."/>
            <person name="Salzberg S.L."/>
            <person name="Fraser-Liggett C.M."/>
            <person name="Rasko D.A."/>
        </authorList>
    </citation>
    <scope>NUCLEOTIDE SEQUENCE [LARGE SCALE GENOMIC DNA]</scope>
    <source>
        <strain>Ames ancestor</strain>
    </source>
</reference>
<reference key="3">
    <citation type="submission" date="2004-01" db="EMBL/GenBank/DDBJ databases">
        <title>Complete genome sequence of Bacillus anthracis Sterne.</title>
        <authorList>
            <person name="Brettin T.S."/>
            <person name="Bruce D."/>
            <person name="Challacombe J.F."/>
            <person name="Gilna P."/>
            <person name="Han C."/>
            <person name="Hill K."/>
            <person name="Hitchcock P."/>
            <person name="Jackson P."/>
            <person name="Keim P."/>
            <person name="Longmire J."/>
            <person name="Lucas S."/>
            <person name="Okinaka R."/>
            <person name="Richardson P."/>
            <person name="Rubin E."/>
            <person name="Tice H."/>
        </authorList>
    </citation>
    <scope>NUCLEOTIDE SEQUENCE [LARGE SCALE GENOMIC DNA]</scope>
    <source>
        <strain>Sterne</strain>
    </source>
</reference>
<proteinExistence type="inferred from homology"/>